<gene>
    <name evidence="1" type="primary">bioD</name>
    <name type="ordered locus">XCC0587</name>
</gene>
<protein>
    <recommendedName>
        <fullName evidence="1">ATP-dependent dethiobiotin synthetase BioD</fullName>
        <ecNumber evidence="1">6.3.3.3</ecNumber>
    </recommendedName>
    <alternativeName>
        <fullName evidence="1">DTB synthetase</fullName>
        <shortName evidence="1">DTBS</shortName>
    </alternativeName>
    <alternativeName>
        <fullName evidence="1">Dethiobiotin synthase</fullName>
    </alternativeName>
</protein>
<comment type="function">
    <text evidence="1">Catalyzes a mechanistically unusual reaction, the ATP-dependent insertion of CO2 between the N7 and N8 nitrogen atoms of 7,8-diaminopelargonic acid (DAPA, also called 7,8-diammoniononanoate) to form a ureido ring.</text>
</comment>
<comment type="catalytic activity">
    <reaction evidence="1">
        <text>(7R,8S)-7,8-diammoniononanoate + CO2 + ATP = (4R,5S)-dethiobiotin + ADP + phosphate + 3 H(+)</text>
        <dbReference type="Rhea" id="RHEA:15805"/>
        <dbReference type="ChEBI" id="CHEBI:15378"/>
        <dbReference type="ChEBI" id="CHEBI:16526"/>
        <dbReference type="ChEBI" id="CHEBI:30616"/>
        <dbReference type="ChEBI" id="CHEBI:43474"/>
        <dbReference type="ChEBI" id="CHEBI:149469"/>
        <dbReference type="ChEBI" id="CHEBI:149473"/>
        <dbReference type="ChEBI" id="CHEBI:456216"/>
        <dbReference type="EC" id="6.3.3.3"/>
    </reaction>
</comment>
<comment type="cofactor">
    <cofactor evidence="1">
        <name>Mg(2+)</name>
        <dbReference type="ChEBI" id="CHEBI:18420"/>
    </cofactor>
</comment>
<comment type="pathway">
    <text evidence="1">Cofactor biosynthesis; biotin biosynthesis; biotin from 7,8-diaminononanoate: step 1/2.</text>
</comment>
<comment type="subunit">
    <text evidence="1">Homodimer.</text>
</comment>
<comment type="subcellular location">
    <subcellularLocation>
        <location evidence="1">Cytoplasm</location>
    </subcellularLocation>
</comment>
<comment type="similarity">
    <text evidence="1">Belongs to the dethiobiotin synthetase family.</text>
</comment>
<keyword id="KW-0067">ATP-binding</keyword>
<keyword id="KW-0093">Biotin biosynthesis</keyword>
<keyword id="KW-0963">Cytoplasm</keyword>
<keyword id="KW-0436">Ligase</keyword>
<keyword id="KW-0460">Magnesium</keyword>
<keyword id="KW-0479">Metal-binding</keyword>
<keyword id="KW-0547">Nucleotide-binding</keyword>
<keyword id="KW-1185">Reference proteome</keyword>
<feature type="chain" id="PRO_0000187999" description="ATP-dependent dethiobiotin synthetase BioD">
    <location>
        <begin position="1"/>
        <end position="224"/>
    </location>
</feature>
<feature type="active site" evidence="1">
    <location>
        <position position="39"/>
    </location>
</feature>
<feature type="binding site" evidence="1">
    <location>
        <begin position="14"/>
        <end position="19"/>
    </location>
    <ligand>
        <name>ATP</name>
        <dbReference type="ChEBI" id="CHEBI:30616"/>
    </ligand>
</feature>
<feature type="binding site" evidence="1">
    <location>
        <position position="18"/>
    </location>
    <ligand>
        <name>Mg(2+)</name>
        <dbReference type="ChEBI" id="CHEBI:18420"/>
    </ligand>
</feature>
<feature type="binding site" evidence="1">
    <location>
        <position position="43"/>
    </location>
    <ligand>
        <name>substrate</name>
    </ligand>
</feature>
<feature type="binding site" evidence="1">
    <location>
        <position position="56"/>
    </location>
    <ligand>
        <name>ATP</name>
        <dbReference type="ChEBI" id="CHEBI:30616"/>
    </ligand>
</feature>
<feature type="binding site" evidence="1">
    <location>
        <position position="56"/>
    </location>
    <ligand>
        <name>Mg(2+)</name>
        <dbReference type="ChEBI" id="CHEBI:18420"/>
    </ligand>
</feature>
<feature type="binding site" evidence="1">
    <location>
        <begin position="117"/>
        <end position="120"/>
    </location>
    <ligand>
        <name>ATP</name>
        <dbReference type="ChEBI" id="CHEBI:30616"/>
    </ligand>
</feature>
<feature type="binding site" evidence="1">
    <location>
        <position position="117"/>
    </location>
    <ligand>
        <name>Mg(2+)</name>
        <dbReference type="ChEBI" id="CHEBI:18420"/>
    </ligand>
</feature>
<feature type="binding site" evidence="1">
    <location>
        <begin position="177"/>
        <end position="178"/>
    </location>
    <ligand>
        <name>ATP</name>
        <dbReference type="ChEBI" id="CHEBI:30616"/>
    </ligand>
</feature>
<name>BIOD_XANCP</name>
<organism>
    <name type="scientific">Xanthomonas campestris pv. campestris (strain ATCC 33913 / DSM 3586 / NCPPB 528 / LMG 568 / P 25)</name>
    <dbReference type="NCBI Taxonomy" id="190485"/>
    <lineage>
        <taxon>Bacteria</taxon>
        <taxon>Pseudomonadati</taxon>
        <taxon>Pseudomonadota</taxon>
        <taxon>Gammaproteobacteria</taxon>
        <taxon>Lysobacterales</taxon>
        <taxon>Lysobacteraceae</taxon>
        <taxon>Xanthomonas</taxon>
    </lineage>
</organism>
<dbReference type="EC" id="6.3.3.3" evidence="1"/>
<dbReference type="EMBL" id="AE008922">
    <property type="protein sequence ID" value="AAM39903.1"/>
    <property type="molecule type" value="Genomic_DNA"/>
</dbReference>
<dbReference type="RefSeq" id="NP_635979.1">
    <property type="nucleotide sequence ID" value="NC_003902.1"/>
</dbReference>
<dbReference type="RefSeq" id="WP_011035832.1">
    <property type="nucleotide sequence ID" value="NC_003902.1"/>
</dbReference>
<dbReference type="SMR" id="Q8PCW4"/>
<dbReference type="STRING" id="190485.XCC0587"/>
<dbReference type="EnsemblBacteria" id="AAM39903">
    <property type="protein sequence ID" value="AAM39903"/>
    <property type="gene ID" value="XCC0587"/>
</dbReference>
<dbReference type="KEGG" id="xcc:XCC0587"/>
<dbReference type="PATRIC" id="fig|190485.4.peg.646"/>
<dbReference type="eggNOG" id="COG0132">
    <property type="taxonomic scope" value="Bacteria"/>
</dbReference>
<dbReference type="HOGENOM" id="CLU_072551_0_0_6"/>
<dbReference type="OrthoDB" id="9802097at2"/>
<dbReference type="UniPathway" id="UPA00078">
    <property type="reaction ID" value="UER00161"/>
</dbReference>
<dbReference type="Proteomes" id="UP000001010">
    <property type="component" value="Chromosome"/>
</dbReference>
<dbReference type="GO" id="GO:0005829">
    <property type="term" value="C:cytosol"/>
    <property type="evidence" value="ECO:0000318"/>
    <property type="project" value="GO_Central"/>
</dbReference>
<dbReference type="GO" id="GO:0005524">
    <property type="term" value="F:ATP binding"/>
    <property type="evidence" value="ECO:0007669"/>
    <property type="project" value="UniProtKB-UniRule"/>
</dbReference>
<dbReference type="GO" id="GO:0004141">
    <property type="term" value="F:dethiobiotin synthase activity"/>
    <property type="evidence" value="ECO:0000318"/>
    <property type="project" value="GO_Central"/>
</dbReference>
<dbReference type="GO" id="GO:0000287">
    <property type="term" value="F:magnesium ion binding"/>
    <property type="evidence" value="ECO:0007669"/>
    <property type="project" value="UniProtKB-UniRule"/>
</dbReference>
<dbReference type="GO" id="GO:0009102">
    <property type="term" value="P:biotin biosynthetic process"/>
    <property type="evidence" value="ECO:0000318"/>
    <property type="project" value="GO_Central"/>
</dbReference>
<dbReference type="CDD" id="cd03109">
    <property type="entry name" value="DTBS"/>
    <property type="match status" value="1"/>
</dbReference>
<dbReference type="FunFam" id="3.40.50.300:FF:000292">
    <property type="entry name" value="ATP-dependent dethiobiotin synthetase BioD"/>
    <property type="match status" value="1"/>
</dbReference>
<dbReference type="Gene3D" id="3.40.50.300">
    <property type="entry name" value="P-loop containing nucleotide triphosphate hydrolases"/>
    <property type="match status" value="1"/>
</dbReference>
<dbReference type="HAMAP" id="MF_00336">
    <property type="entry name" value="BioD"/>
    <property type="match status" value="1"/>
</dbReference>
<dbReference type="InterPro" id="IPR004472">
    <property type="entry name" value="DTB_synth_BioD"/>
</dbReference>
<dbReference type="InterPro" id="IPR027417">
    <property type="entry name" value="P-loop_NTPase"/>
</dbReference>
<dbReference type="NCBIfam" id="TIGR00347">
    <property type="entry name" value="bioD"/>
    <property type="match status" value="1"/>
</dbReference>
<dbReference type="PANTHER" id="PTHR43210">
    <property type="entry name" value="DETHIOBIOTIN SYNTHETASE"/>
    <property type="match status" value="1"/>
</dbReference>
<dbReference type="PANTHER" id="PTHR43210:SF5">
    <property type="entry name" value="DETHIOBIOTIN SYNTHETASE"/>
    <property type="match status" value="1"/>
</dbReference>
<dbReference type="Pfam" id="PF13500">
    <property type="entry name" value="AAA_26"/>
    <property type="match status" value="1"/>
</dbReference>
<dbReference type="PIRSF" id="PIRSF006755">
    <property type="entry name" value="DTB_synth"/>
    <property type="match status" value="1"/>
</dbReference>
<dbReference type="SUPFAM" id="SSF52540">
    <property type="entry name" value="P-loop containing nucleoside triphosphate hydrolases"/>
    <property type="match status" value="1"/>
</dbReference>
<proteinExistence type="inferred from homology"/>
<accession>Q8PCW4</accession>
<evidence type="ECO:0000255" key="1">
    <source>
        <dbReference type="HAMAP-Rule" id="MF_00336"/>
    </source>
</evidence>
<sequence>MQFPAFYVTGTDTGIGKTVASTALLHAVRARGHTAVGMKPVASGCVATPQGWHNEDALALQAASQPQPDYATLNPYALPAALAPELAAADVGVSLSLVPLQLAFAQLRAQAEVVVVEGVGGWAAPLSAQLDQADLVRALQLPVVLVVGVRLGCINHARLTAAAIAADGLRCIGWIANEIDPQMERIEDNIRMLGQRLAMPCWGRIPWRPNAQAEALAQHIRLPQ</sequence>
<reference key="1">
    <citation type="journal article" date="2002" name="Nature">
        <title>Comparison of the genomes of two Xanthomonas pathogens with differing host specificities.</title>
        <authorList>
            <person name="da Silva A.C.R."/>
            <person name="Ferro J.A."/>
            <person name="Reinach F.C."/>
            <person name="Farah C.S."/>
            <person name="Furlan L.R."/>
            <person name="Quaggio R.B."/>
            <person name="Monteiro-Vitorello C.B."/>
            <person name="Van Sluys M.A."/>
            <person name="Almeida N.F. Jr."/>
            <person name="Alves L.M.C."/>
            <person name="do Amaral A.M."/>
            <person name="Bertolini M.C."/>
            <person name="Camargo L.E.A."/>
            <person name="Camarotte G."/>
            <person name="Cannavan F."/>
            <person name="Cardozo J."/>
            <person name="Chambergo F."/>
            <person name="Ciapina L.P."/>
            <person name="Cicarelli R.M.B."/>
            <person name="Coutinho L.L."/>
            <person name="Cursino-Santos J.R."/>
            <person name="El-Dorry H."/>
            <person name="Faria J.B."/>
            <person name="Ferreira A.J.S."/>
            <person name="Ferreira R.C.C."/>
            <person name="Ferro M.I.T."/>
            <person name="Formighieri E.F."/>
            <person name="Franco M.C."/>
            <person name="Greggio C.C."/>
            <person name="Gruber A."/>
            <person name="Katsuyama A.M."/>
            <person name="Kishi L.T."/>
            <person name="Leite R.P."/>
            <person name="Lemos E.G.M."/>
            <person name="Lemos M.V.F."/>
            <person name="Locali E.C."/>
            <person name="Machado M.A."/>
            <person name="Madeira A.M.B.N."/>
            <person name="Martinez-Rossi N.M."/>
            <person name="Martins E.C."/>
            <person name="Meidanis J."/>
            <person name="Menck C.F.M."/>
            <person name="Miyaki C.Y."/>
            <person name="Moon D.H."/>
            <person name="Moreira L.M."/>
            <person name="Novo M.T.M."/>
            <person name="Okura V.K."/>
            <person name="Oliveira M.C."/>
            <person name="Oliveira V.R."/>
            <person name="Pereira H.A."/>
            <person name="Rossi A."/>
            <person name="Sena J.A.D."/>
            <person name="Silva C."/>
            <person name="de Souza R.F."/>
            <person name="Spinola L.A.F."/>
            <person name="Takita M.A."/>
            <person name="Tamura R.E."/>
            <person name="Teixeira E.C."/>
            <person name="Tezza R.I.D."/>
            <person name="Trindade dos Santos M."/>
            <person name="Truffi D."/>
            <person name="Tsai S.M."/>
            <person name="White F.F."/>
            <person name="Setubal J.C."/>
            <person name="Kitajima J.P."/>
        </authorList>
    </citation>
    <scope>NUCLEOTIDE SEQUENCE [LARGE SCALE GENOMIC DNA]</scope>
    <source>
        <strain>ATCC 33913 / DSM 3586 / NCPPB 528 / LMG 568 / P 25</strain>
    </source>
</reference>